<keyword id="KW-0496">Mitochondrion</keyword>
<keyword id="KW-1185">Reference proteome</keyword>
<keyword id="KW-0809">Transit peptide</keyword>
<dbReference type="EMBL" id="X87611">
    <property type="protein sequence ID" value="CAA60924.1"/>
    <property type="status" value="ALT_INIT"/>
    <property type="molecule type" value="Genomic_DNA"/>
</dbReference>
<dbReference type="EMBL" id="Z49503">
    <property type="protein sequence ID" value="CAA89525.1"/>
    <property type="status" value="ALT_INIT"/>
    <property type="molecule type" value="Genomic_DNA"/>
</dbReference>
<dbReference type="EMBL" id="BK006943">
    <property type="protein sequence ID" value="DAA08793.1"/>
    <property type="molecule type" value="Genomic_DNA"/>
</dbReference>
<dbReference type="PIR" id="S55190">
    <property type="entry name" value="S55190"/>
</dbReference>
<dbReference type="RefSeq" id="NP_012536.2">
    <property type="nucleotide sequence ID" value="NM_001181660.1"/>
</dbReference>
<dbReference type="BioGRID" id="33759">
    <property type="interactions" value="65"/>
</dbReference>
<dbReference type="DIP" id="DIP-4242N"/>
<dbReference type="FunCoup" id="P47084">
    <property type="interactions" value="43"/>
</dbReference>
<dbReference type="IntAct" id="P47084">
    <property type="interactions" value="6"/>
</dbReference>
<dbReference type="STRING" id="4932.YJR003C"/>
<dbReference type="GlyGen" id="P47084">
    <property type="glycosylation" value="1 site"/>
</dbReference>
<dbReference type="iPTMnet" id="P47084"/>
<dbReference type="PaxDb" id="4932-YJR003C"/>
<dbReference type="PeptideAtlas" id="P47084"/>
<dbReference type="EnsemblFungi" id="YJR003C_mRNA">
    <property type="protein sequence ID" value="YJR003C"/>
    <property type="gene ID" value="YJR003C"/>
</dbReference>
<dbReference type="GeneID" id="853459"/>
<dbReference type="KEGG" id="sce:YJR003C"/>
<dbReference type="AGR" id="SGD:S000003763"/>
<dbReference type="SGD" id="S000003763">
    <property type="gene designation" value="MRX12"/>
</dbReference>
<dbReference type="VEuPathDB" id="FungiDB:YJR003C"/>
<dbReference type="eggNOG" id="ENOG502QVKH">
    <property type="taxonomic scope" value="Eukaryota"/>
</dbReference>
<dbReference type="HOGENOM" id="CLU_038968_0_0_1"/>
<dbReference type="InParanoid" id="P47084"/>
<dbReference type="OMA" id="NDYIQNV"/>
<dbReference type="OrthoDB" id="4046837at2759"/>
<dbReference type="BioCyc" id="YEAST:G3O-31649-MONOMER"/>
<dbReference type="BioGRID-ORCS" id="853459">
    <property type="hits" value="0 hits in 10 CRISPR screens"/>
</dbReference>
<dbReference type="PRO" id="PR:P47084"/>
<dbReference type="Proteomes" id="UP000002311">
    <property type="component" value="Chromosome X"/>
</dbReference>
<dbReference type="RNAct" id="P47084">
    <property type="molecule type" value="protein"/>
</dbReference>
<dbReference type="GO" id="GO:0005739">
    <property type="term" value="C:mitochondrion"/>
    <property type="evidence" value="ECO:0007005"/>
    <property type="project" value="SGD"/>
</dbReference>
<accession>P47084</accession>
<accession>D6VWH7</accession>
<name>MRX12_YEAST</name>
<reference key="1">
    <citation type="journal article" date="1996" name="EMBO J.">
        <title>Complete nucleotide sequence of Saccharomyces cerevisiae chromosome X.</title>
        <authorList>
            <person name="Galibert F."/>
            <person name="Alexandraki D."/>
            <person name="Baur A."/>
            <person name="Boles E."/>
            <person name="Chalwatzis N."/>
            <person name="Chuat J.-C."/>
            <person name="Coster F."/>
            <person name="Cziepluch C."/>
            <person name="de Haan M."/>
            <person name="Domdey H."/>
            <person name="Durand P."/>
            <person name="Entian K.-D."/>
            <person name="Gatius M."/>
            <person name="Goffeau A."/>
            <person name="Grivell L.A."/>
            <person name="Hennemann A."/>
            <person name="Herbert C.J."/>
            <person name="Heumann K."/>
            <person name="Hilger F."/>
            <person name="Hollenberg C.P."/>
            <person name="Huang M.-E."/>
            <person name="Jacq C."/>
            <person name="Jauniaux J.-C."/>
            <person name="Katsoulou C."/>
            <person name="Kirchrath L."/>
            <person name="Kleine K."/>
            <person name="Kordes E."/>
            <person name="Koetter P."/>
            <person name="Liebl S."/>
            <person name="Louis E.J."/>
            <person name="Manus V."/>
            <person name="Mewes H.-W."/>
            <person name="Miosga T."/>
            <person name="Obermaier B."/>
            <person name="Perea J."/>
            <person name="Pohl T.M."/>
            <person name="Portetelle D."/>
            <person name="Pujol A."/>
            <person name="Purnelle B."/>
            <person name="Ramezani Rad M."/>
            <person name="Rasmussen S.W."/>
            <person name="Rose M."/>
            <person name="Rossau R."/>
            <person name="Schaaff-Gerstenschlaeger I."/>
            <person name="Smits P.H.M."/>
            <person name="Scarcez T."/>
            <person name="Soriano N."/>
            <person name="To Van D."/>
            <person name="Tzermia M."/>
            <person name="Van Broekhoven A."/>
            <person name="Vandenbol M."/>
            <person name="Wedler H."/>
            <person name="von Wettstein D."/>
            <person name="Wambutt R."/>
            <person name="Zagulski M."/>
            <person name="Zollner A."/>
            <person name="Karpfinger-Hartl L."/>
        </authorList>
    </citation>
    <scope>NUCLEOTIDE SEQUENCE [LARGE SCALE GENOMIC DNA]</scope>
    <source>
        <strain>ATCC 204508 / S288c</strain>
    </source>
</reference>
<reference key="2">
    <citation type="journal article" date="2014" name="G3 (Bethesda)">
        <title>The reference genome sequence of Saccharomyces cerevisiae: Then and now.</title>
        <authorList>
            <person name="Engel S.R."/>
            <person name="Dietrich F.S."/>
            <person name="Fisk D.G."/>
            <person name="Binkley G."/>
            <person name="Balakrishnan R."/>
            <person name="Costanzo M.C."/>
            <person name="Dwight S.S."/>
            <person name="Hitz B.C."/>
            <person name="Karra K."/>
            <person name="Nash R.S."/>
            <person name="Weng S."/>
            <person name="Wong E.D."/>
            <person name="Lloyd P."/>
            <person name="Skrzypek M.S."/>
            <person name="Miyasato S.R."/>
            <person name="Simison M."/>
            <person name="Cherry J.M."/>
        </authorList>
    </citation>
    <scope>GENOME REANNOTATION</scope>
    <source>
        <strain>ATCC 204508 / S288c</strain>
    </source>
</reference>
<reference key="3">
    <citation type="journal article" date="2003" name="Nature">
        <title>Sequencing and comparison of yeast species to identify genes and regulatory elements.</title>
        <authorList>
            <person name="Kellis M."/>
            <person name="Patterson N."/>
            <person name="Endrizzi M."/>
            <person name="Birren B.W."/>
            <person name="Lander E.S."/>
        </authorList>
    </citation>
    <scope>IDENTIFICATION OF PROBABLE INITIATION SITE</scope>
</reference>
<reference key="4">
    <citation type="journal article" date="2003" name="Nature">
        <title>Global analysis of protein localization in budding yeast.</title>
        <authorList>
            <person name="Huh W.-K."/>
            <person name="Falvo J.V."/>
            <person name="Gerke L.C."/>
            <person name="Carroll A.S."/>
            <person name="Howson R.W."/>
            <person name="Weissman J.S."/>
            <person name="O'Shea E.K."/>
        </authorList>
    </citation>
    <scope>SUBCELLULAR LOCATION [LARGE SCALE ANALYSIS]</scope>
</reference>
<reference key="5">
    <citation type="journal article" date="2003" name="Nature">
        <title>Global analysis of protein expression in yeast.</title>
        <authorList>
            <person name="Ghaemmaghami S."/>
            <person name="Huh W.-K."/>
            <person name="Bower K."/>
            <person name="Howson R.W."/>
            <person name="Belle A."/>
            <person name="Dephoure N."/>
            <person name="O'Shea E.K."/>
            <person name="Weissman J.S."/>
        </authorList>
    </citation>
    <scope>LEVEL OF PROTEIN EXPRESSION [LARGE SCALE ANALYSIS]</scope>
</reference>
<reference key="6">
    <citation type="journal article" date="2003" name="Science">
        <title>Finding functional features in Saccharomyces genomes by phylogenetic footprinting.</title>
        <authorList>
            <person name="Cliften P.F."/>
            <person name="Sudarsanam P."/>
            <person name="Desikan A."/>
            <person name="Fulton L."/>
            <person name="Fulton B."/>
            <person name="Majors J."/>
            <person name="Waterston R."/>
            <person name="Cohen B.A."/>
            <person name="Johnston M."/>
        </authorList>
    </citation>
    <scope>IDENTIFICATION OF PROBABLE INITIATION SITE</scope>
</reference>
<reference key="7">
    <citation type="journal article" date="2006" name="J. Proteome Res.">
        <title>Toward the complete yeast mitochondrial proteome: multidimensional separation techniques for mitochondrial proteomics.</title>
        <authorList>
            <person name="Reinders J."/>
            <person name="Zahedi R.P."/>
            <person name="Pfanner N."/>
            <person name="Meisinger C."/>
            <person name="Sickmann A."/>
        </authorList>
    </citation>
    <scope>SUBCELLULAR LOCATION [LARGE SCALE ANALYSIS]</scope>
    <scope>IDENTIFICATION BY MASS SPECTROMETRY</scope>
</reference>
<reference key="8">
    <citation type="journal article" date="2015" name="Cell Rep.">
        <title>Organization of mitochondrial gene expression in two distinct ribosome-containing assemblies.</title>
        <authorList>
            <person name="Kehrein K."/>
            <person name="Schilling R."/>
            <person name="Moller-Hergt B.V."/>
            <person name="Wurm C.A."/>
            <person name="Jakobs S."/>
            <person name="Lamkemeyer T."/>
            <person name="Langer T."/>
            <person name="Ott M."/>
        </authorList>
    </citation>
    <scope>FUNCTION</scope>
    <scope>SUBUNIT</scope>
</reference>
<protein>
    <recommendedName>
        <fullName evidence="8">MIOREX complex component 12</fullName>
    </recommendedName>
    <alternativeName>
        <fullName evidence="6">Mitochondrial organization of gene expression protein 12</fullName>
    </alternativeName>
</protein>
<organism>
    <name type="scientific">Saccharomyces cerevisiae (strain ATCC 204508 / S288c)</name>
    <name type="common">Baker's yeast</name>
    <dbReference type="NCBI Taxonomy" id="559292"/>
    <lineage>
        <taxon>Eukaryota</taxon>
        <taxon>Fungi</taxon>
        <taxon>Dikarya</taxon>
        <taxon>Ascomycota</taxon>
        <taxon>Saccharomycotina</taxon>
        <taxon>Saccharomycetes</taxon>
        <taxon>Saccharomycetales</taxon>
        <taxon>Saccharomycetaceae</taxon>
        <taxon>Saccharomyces</taxon>
    </lineage>
</organism>
<feature type="transit peptide" description="Mitochondrion" evidence="1">
    <location>
        <begin position="1"/>
        <end position="35"/>
    </location>
</feature>
<feature type="chain" id="PRO_0000203081" description="MIOREX complex component 12">
    <location>
        <begin position="36"/>
        <end position="519"/>
    </location>
</feature>
<gene>
    <name evidence="6" type="primary">MRX12</name>
    <name evidence="9" type="ordered locus">YJR003C</name>
    <name type="ORF">J1415</name>
    <name type="ORF">YJR83.30</name>
</gene>
<sequence length="519" mass="59766">MLRSLHSAATLSNKRFYSLISHSNRKNIIKKLLRHPSFDPIRHHLPEDITTIDPYSLSQNVIESLNKLEVPKKDAAMVHNMMIENLSDLDYGVATIHSNNLRDLDLKPSLPAIKQIIRNNPGRVQSSWELFTQYKASMENVPDELMEVVLEKIIKFDKAEKVDGKKSLTYQDLVRCLYLINHFSSNYNLPSELVEPILIYIVDNGIPNVLGSVLKYKIPLSFFDKYVSEMTQYQICELYDFYSLDNIVADPLVLHKCLTVLGENEKIQQTEEEKEIISKLEEEIDIVKSQCHDNWSLEFPNWSVRKTATSFEELFLEIQKRNIDKKDFELAHKLLRLIGAFKGKVSLFFKLYDEYLLKFKNNEDDLMFEAFLTLCCQGYKSSNEKMLQYAEAFIKEDFDSKLESKIQSVLIVANAKANIDLSLKIYNSNISTAKREKDKYTDLAESDVLTESLILAFLSRDDADFARVIFDGALGEKLISGPTAAKKIKNLLAQYGEALETKTSKQVMQTKIEHYMESI</sequence>
<evidence type="ECO:0000255" key="1"/>
<evidence type="ECO:0000269" key="2">
    <source>
    </source>
</evidence>
<evidence type="ECO:0000269" key="3">
    <source>
    </source>
</evidence>
<evidence type="ECO:0000269" key="4">
    <source>
    </source>
</evidence>
<evidence type="ECO:0000269" key="5">
    <source>
    </source>
</evidence>
<evidence type="ECO:0000303" key="6">
    <source>
    </source>
</evidence>
<evidence type="ECO:0000305" key="7"/>
<evidence type="ECO:0000305" key="8">
    <source>
    </source>
</evidence>
<evidence type="ECO:0000312" key="9">
    <source>
        <dbReference type="SGD" id="S000003763"/>
    </source>
</evidence>
<proteinExistence type="evidence at protein level"/>
<comment type="function">
    <text evidence="5">Component of MIOREX complexes, large expressome-like assemblies of ribosomes with factors involved in all the steps of post-transcriptional gene expression.</text>
</comment>
<comment type="subunit">
    <text evidence="5">Associates with the mitochondrial ribosome.</text>
</comment>
<comment type="subcellular location">
    <subcellularLocation>
        <location evidence="2 4">Mitochondrion</location>
    </subcellularLocation>
</comment>
<comment type="miscellaneous">
    <text evidence="3">Present with 3280 molecules/cell in log phase SD medium.</text>
</comment>
<comment type="sequence caution" evidence="7">
    <conflict type="erroneous initiation">
        <sequence resource="EMBL-CDS" id="CAA60924"/>
    </conflict>
</comment>
<comment type="sequence caution" evidence="7">
    <conflict type="erroneous initiation">
        <sequence resource="EMBL-CDS" id="CAA89525"/>
    </conflict>
</comment>